<organismHost>
    <name type="scientific">Homo sapiens</name>
    <name type="common">Human</name>
    <dbReference type="NCBI Taxonomy" id="9606"/>
</organismHost>
<accession>P03291</accession>
<evidence type="ECO:0000256" key="1">
    <source>
        <dbReference type="SAM" id="MobiDB-lite"/>
    </source>
</evidence>
<feature type="chain" id="PRO_0000221929" description="Uncharacterized protein F-215">
    <location>
        <begin position="1"/>
        <end position="215"/>
    </location>
</feature>
<feature type="region of interest" description="Disordered" evidence="1">
    <location>
        <begin position="1"/>
        <end position="144"/>
    </location>
</feature>
<feature type="region of interest" description="Disordered" evidence="1">
    <location>
        <begin position="156"/>
        <end position="215"/>
    </location>
</feature>
<feature type="compositionally biased region" description="Low complexity" evidence="1">
    <location>
        <begin position="16"/>
        <end position="29"/>
    </location>
</feature>
<feature type="compositionally biased region" description="Low complexity" evidence="1">
    <location>
        <begin position="49"/>
        <end position="58"/>
    </location>
</feature>
<feature type="compositionally biased region" description="Low complexity" evidence="1">
    <location>
        <begin position="85"/>
        <end position="96"/>
    </location>
</feature>
<feature type="compositionally biased region" description="Low complexity" evidence="1">
    <location>
        <begin position="104"/>
        <end position="127"/>
    </location>
</feature>
<organism>
    <name type="scientific">Human adenovirus C serotype 2</name>
    <name type="common">HAdV-2</name>
    <name type="synonym">Human adenovirus 2</name>
    <dbReference type="NCBI Taxonomy" id="10515"/>
    <lineage>
        <taxon>Viruses</taxon>
        <taxon>Varidnaviria</taxon>
        <taxon>Bamfordvirae</taxon>
        <taxon>Preplasmiviricota</taxon>
        <taxon>Tectiliviricetes</taxon>
        <taxon>Rowavirales</taxon>
        <taxon>Adenoviridae</taxon>
        <taxon>Mastadenovirus</taxon>
        <taxon>Human mastadenovirus C</taxon>
    </lineage>
</organism>
<protein>
    <recommendedName>
        <fullName>Uncharacterized protein F-215</fullName>
    </recommendedName>
</protein>
<proteinExistence type="predicted"/>
<sequence length="215" mass="22788">MPKGAWSTAASGTREASTPSRSSWPASPTTSPPPWSEPDAEISRRKRSSSSWPKSPIKTTQETCRRFCARPPSTTPKLILSNSLSGSSSPGPSSSRRGARFRRSTAASSRSPATSARSTSSCPRAAPTCPCPLSRRVPSPPYLRGPARVTAFRCIIQGHPRGPPPAARYRSRAAGMRPLASHRRRHQPAPGNQVSPGPSPRPDPAMRGKPAGAPA</sequence>
<keyword id="KW-1185">Reference proteome</keyword>
<dbReference type="EMBL" id="J01917">
    <property type="status" value="NOT_ANNOTATED_CDS"/>
    <property type="molecule type" value="Genomic_DNA"/>
</dbReference>
<dbReference type="PIR" id="A43046">
    <property type="entry name" value="A03863"/>
</dbReference>
<dbReference type="Proteomes" id="UP000008167">
    <property type="component" value="Segment"/>
</dbReference>
<reference key="1">
    <citation type="journal article" date="1982" name="J. Biol. Chem.">
        <title>Nucleotide sequences from the adenovirus-2 genome.</title>
        <authorList>
            <person name="Gingeras T.R."/>
            <person name="Sciaky D."/>
            <person name="Gelinas R.E."/>
            <person name="Bing-Dong J."/>
            <person name="Yen C.E."/>
            <person name="Kelly M.M."/>
            <person name="Bullock P.A."/>
            <person name="Parsons B.L."/>
            <person name="O'Neill K.E."/>
            <person name="Roberts R.J."/>
        </authorList>
    </citation>
    <scope>NUCLEOTIDE SEQUENCE [GENOMIC DNA]</scope>
</reference>
<reference key="2">
    <citation type="journal article" date="1982" name="J. Biol. Chem.">
        <title>DNA sequence analysis of the region encoding the terminal protein and the hypothetical N-gene product of adenovirus type 2.</title>
        <authorList>
            <person name="Alestroem P."/>
            <person name="Akusjaervi G."/>
            <person name="Pettersson M."/>
            <person name="Pettersson U."/>
        </authorList>
    </citation>
    <scope>NUCLEOTIDE SEQUENCE [GENOMIC DNA]</scope>
</reference>
<name>Y215_ADE02</name>